<proteinExistence type="inferred from homology"/>
<evidence type="ECO:0000250" key="1"/>
<evidence type="ECO:0000255" key="2">
    <source>
        <dbReference type="HAMAP-Rule" id="MF_01344"/>
    </source>
</evidence>
<feature type="chain" id="PRO_0000276547" description="Cytochrome b6-f complex subunit 4">
    <location>
        <begin position="1"/>
        <end position="160"/>
    </location>
</feature>
<feature type="transmembrane region" description="Helical" evidence="2">
    <location>
        <begin position="36"/>
        <end position="56"/>
    </location>
</feature>
<feature type="transmembrane region" description="Helical" evidence="2">
    <location>
        <begin position="95"/>
        <end position="115"/>
    </location>
</feature>
<feature type="transmembrane region" description="Helical" evidence="2">
    <location>
        <begin position="131"/>
        <end position="151"/>
    </location>
</feature>
<name>PETD_THAPS</name>
<keyword id="KW-0150">Chloroplast</keyword>
<keyword id="KW-0249">Electron transport</keyword>
<keyword id="KW-0472">Membrane</keyword>
<keyword id="KW-0602">Photosynthesis</keyword>
<keyword id="KW-0934">Plastid</keyword>
<keyword id="KW-0793">Thylakoid</keyword>
<keyword id="KW-0812">Transmembrane</keyword>
<keyword id="KW-1133">Transmembrane helix</keyword>
<keyword id="KW-0813">Transport</keyword>
<comment type="function">
    <text evidence="2">Component of the cytochrome b6-f complex, which mediates electron transfer between photosystem II (PSII) and photosystem I (PSI), cyclic electron flow around PSI, and state transitions.</text>
</comment>
<comment type="subunit">
    <text evidence="1">The 4 large subunits of the cytochrome b6-f complex are cytochrome b6, subunit IV (17 kDa polypeptide, petD), cytochrome f and the Rieske protein, while the 4 small subunits are petG, petL, petM and petN. The complex functions as a dimer (By similarity).</text>
</comment>
<comment type="subcellular location">
    <subcellularLocation>
        <location evidence="2">Plastid</location>
        <location evidence="2">Chloroplast thylakoid membrane</location>
        <topology evidence="2">Multi-pass membrane protein</topology>
    </subcellularLocation>
</comment>
<comment type="similarity">
    <text evidence="2">Belongs to the cytochrome b family. PetD subfamily.</text>
</comment>
<organism>
    <name type="scientific">Thalassiosira pseudonana</name>
    <name type="common">Marine diatom</name>
    <name type="synonym">Cyclotella nana</name>
    <dbReference type="NCBI Taxonomy" id="35128"/>
    <lineage>
        <taxon>Eukaryota</taxon>
        <taxon>Sar</taxon>
        <taxon>Stramenopiles</taxon>
        <taxon>Ochrophyta</taxon>
        <taxon>Bacillariophyta</taxon>
        <taxon>Coscinodiscophyceae</taxon>
        <taxon>Thalassiosirophycidae</taxon>
        <taxon>Thalassiosirales</taxon>
        <taxon>Thalassiosiraceae</taxon>
        <taxon>Thalassiosira</taxon>
    </lineage>
</organism>
<protein>
    <recommendedName>
        <fullName evidence="2">Cytochrome b6-f complex subunit 4</fullName>
    </recommendedName>
    <alternativeName>
        <fullName evidence="2">17 kDa polypeptide</fullName>
    </alternativeName>
</protein>
<reference key="1">
    <citation type="journal article" date="2007" name="Mol. Genet. Genomics">
        <title>Chloroplast genomes of the diatoms Phaeodactylum tricornutum and Thalassiosira pseudonana: comparison with other plastid genomes of the red lineage.</title>
        <authorList>
            <person name="Oudot-Le Secq M.-P."/>
            <person name="Grimwood J."/>
            <person name="Shapiro H."/>
            <person name="Armbrust E.V."/>
            <person name="Bowler C."/>
            <person name="Green B.R."/>
        </authorList>
    </citation>
    <scope>NUCLEOTIDE SEQUENCE [LARGE SCALE GENOMIC DNA]</scope>
    <source>
        <strain>CCMP1335 / NEPCC58 / CCAP 1085/12</strain>
    </source>
</reference>
<sequence length="160" mass="17721">MSIIKKPDLTDPKLRAKLAKGMGHNYYGEPAWPNDLLYLFPVCILGTFACCIGLAVMAPTQMGEPADPFNTPLEILPEWYFFPTFNLLRVLPNKLLGVLAMAAVPAGLITVPFIENVNKFQNPFRRPIASLVFITGFIFAVWFGIGACLPIDKAVSLGYW</sequence>
<accession>A0T0T7</accession>
<gene>
    <name evidence="2" type="primary">petD</name>
</gene>
<dbReference type="EMBL" id="EF067921">
    <property type="protein sequence ID" value="ABK20772.1"/>
    <property type="molecule type" value="Genomic_DNA"/>
</dbReference>
<dbReference type="RefSeq" id="YP_874549.1">
    <property type="nucleotide sequence ID" value="NC_008589.1"/>
</dbReference>
<dbReference type="SMR" id="A0T0T7"/>
<dbReference type="STRING" id="35128.A0T0T7"/>
<dbReference type="PaxDb" id="35128-Thapsdraft466"/>
<dbReference type="GeneID" id="4524844"/>
<dbReference type="eggNOG" id="KOG4663">
    <property type="taxonomic scope" value="Eukaryota"/>
</dbReference>
<dbReference type="InParanoid" id="A0T0T7"/>
<dbReference type="OMA" id="KKGMGHN"/>
<dbReference type="GO" id="GO:0009535">
    <property type="term" value="C:chloroplast thylakoid membrane"/>
    <property type="evidence" value="ECO:0007669"/>
    <property type="project" value="UniProtKB-SubCell"/>
</dbReference>
<dbReference type="GO" id="GO:0045158">
    <property type="term" value="F:electron transporter, transferring electrons within cytochrome b6/f complex of photosystem II activity"/>
    <property type="evidence" value="ECO:0007669"/>
    <property type="project" value="UniProtKB-UniRule"/>
</dbReference>
<dbReference type="GO" id="GO:0045156">
    <property type="term" value="F:electron transporter, transferring electrons within the cyclic electron transport pathway of photosynthesis activity"/>
    <property type="evidence" value="ECO:0007669"/>
    <property type="project" value="InterPro"/>
</dbReference>
<dbReference type="GO" id="GO:0016491">
    <property type="term" value="F:oxidoreductase activity"/>
    <property type="evidence" value="ECO:0007669"/>
    <property type="project" value="InterPro"/>
</dbReference>
<dbReference type="GO" id="GO:0009767">
    <property type="term" value="P:photosynthetic electron transport chain"/>
    <property type="evidence" value="ECO:0007669"/>
    <property type="project" value="InterPro"/>
</dbReference>
<dbReference type="CDD" id="cd00290">
    <property type="entry name" value="cytochrome_b_C"/>
    <property type="match status" value="1"/>
</dbReference>
<dbReference type="FunFam" id="1.10.287.980:FF:000001">
    <property type="entry name" value="Cytochrome b6-f complex subunit 4"/>
    <property type="match status" value="1"/>
</dbReference>
<dbReference type="FunFam" id="1.20.5.510:FF:000002">
    <property type="entry name" value="Cytochrome b6-f complex subunit 4"/>
    <property type="match status" value="1"/>
</dbReference>
<dbReference type="Gene3D" id="1.10.287.980">
    <property type="entry name" value="plastocyanin oxidoreductase"/>
    <property type="match status" value="1"/>
</dbReference>
<dbReference type="Gene3D" id="1.20.5.510">
    <property type="entry name" value="Single helix bin"/>
    <property type="match status" value="1"/>
</dbReference>
<dbReference type="HAMAP" id="MF_01344">
    <property type="entry name" value="Cytb6_f_subIV"/>
    <property type="match status" value="1"/>
</dbReference>
<dbReference type="InterPro" id="IPR005798">
    <property type="entry name" value="Cyt_b/b6_C"/>
</dbReference>
<dbReference type="InterPro" id="IPR036150">
    <property type="entry name" value="Cyt_b/b6_C_sf"/>
</dbReference>
<dbReference type="InterPro" id="IPR005870">
    <property type="entry name" value="Cyt_b6/f_cplx_suIV"/>
</dbReference>
<dbReference type="InterPro" id="IPR048260">
    <property type="entry name" value="Cytochrome_b_C_euk/bac"/>
</dbReference>
<dbReference type="NCBIfam" id="TIGR01156">
    <property type="entry name" value="cytb6_f_IV"/>
    <property type="match status" value="1"/>
</dbReference>
<dbReference type="PANTHER" id="PTHR19271">
    <property type="entry name" value="CYTOCHROME B"/>
    <property type="match status" value="1"/>
</dbReference>
<dbReference type="PANTHER" id="PTHR19271:SF16">
    <property type="entry name" value="CYTOCHROME B"/>
    <property type="match status" value="1"/>
</dbReference>
<dbReference type="Pfam" id="PF00032">
    <property type="entry name" value="Cytochrom_B_C"/>
    <property type="match status" value="1"/>
</dbReference>
<dbReference type="PIRSF" id="PIRSF000033">
    <property type="entry name" value="B6f_17K"/>
    <property type="match status" value="1"/>
</dbReference>
<dbReference type="SUPFAM" id="SSF81648">
    <property type="entry name" value="a domain/subunit of cytochrome bc1 complex (Ubiquinol-cytochrome c reductase)"/>
    <property type="match status" value="1"/>
</dbReference>
<dbReference type="PROSITE" id="PS51003">
    <property type="entry name" value="CYTB_CTER"/>
    <property type="match status" value="1"/>
</dbReference>
<geneLocation type="chloroplast"/>